<comment type="function">
    <text evidence="5 6 7 8">Required for polar body extrusion during cytokinesis in embryo development. Affects cortical granule size. Has roles in meiotic chromosome segregation, osmotic barrier function and polarization in conjunction with cpg-2. Binds chitin.</text>
</comment>
<comment type="alternative products">
    <event type="alternative splicing"/>
    <isoform>
        <id>Q17802-1</id>
        <name evidence="9">a</name>
        <sequence type="displayed"/>
    </isoform>
    <isoform>
        <id>Q17802-2</id>
        <name evidence="9">b</name>
        <sequence type="described" ref="VSP_050569"/>
    </isoform>
</comment>
<comment type="tissue specificity">
    <text evidence="4">Expressed in the germline.</text>
</comment>
<comment type="developmental stage">
    <text evidence="4">Expressed throughout development but appears to be up-regulated in adults.</text>
</comment>
<comment type="disruption phenotype">
    <text evidence="6">Worms lacking cpg-1 and cpg-2 exhibit defects in cytokinesis during embryo development, more specifically meiotic chromosome segregation, polar-body extrusion, osmotic barrier function and polarization. Embryos lacking cpg-1 and cpg-2 proteins have multiple nuclei lacking plasma membranes and may also have weak egg shells. Oocytes lacking cpg-1 and cpg-2 show cortical granules that are reduced in size.</text>
</comment>
<dbReference type="EMBL" id="DQ340623">
    <property type="protein sequence ID" value="ABC65811.1"/>
    <property type="molecule type" value="mRNA"/>
</dbReference>
<dbReference type="EMBL" id="Z32840">
    <property type="protein sequence ID" value="CAA83679.1"/>
    <property type="molecule type" value="Genomic_DNA"/>
</dbReference>
<dbReference type="EMBL" id="Z32840">
    <property type="protein sequence ID" value="CAD91625.1"/>
    <property type="molecule type" value="Genomic_DNA"/>
</dbReference>
<dbReference type="PIR" id="T19061">
    <property type="entry name" value="T19061"/>
</dbReference>
<dbReference type="RefSeq" id="NP_001021159.1">
    <molecule id="Q17802-1"/>
    <property type="nucleotide sequence ID" value="NM_001025988.8"/>
</dbReference>
<dbReference type="RefSeq" id="NP_001021160.1">
    <molecule id="Q17802-2"/>
    <property type="nucleotide sequence ID" value="NM_001025989.5"/>
</dbReference>
<dbReference type="BioGRID" id="40822">
    <property type="interactions" value="4"/>
</dbReference>
<dbReference type="DIP" id="DIP-27081N"/>
<dbReference type="FunCoup" id="Q17802">
    <property type="interactions" value="788"/>
</dbReference>
<dbReference type="STRING" id="6239.C07G2.1a.1"/>
<dbReference type="CAZy" id="CBM14">
    <property type="family name" value="Carbohydrate-Binding Module Family 14"/>
</dbReference>
<dbReference type="GlyCosmos" id="Q17802">
    <property type="glycosylation" value="2 sites, No reported glycans"/>
</dbReference>
<dbReference type="iPTMnet" id="Q17802"/>
<dbReference type="PaxDb" id="6239-C07G2.1a"/>
<dbReference type="PeptideAtlas" id="Q17802"/>
<dbReference type="EnsemblMetazoa" id="C07G2.1a.1">
    <molecule id="Q17802-1"/>
    <property type="protein sequence ID" value="C07G2.1a.1"/>
    <property type="gene ID" value="WBGene00000465"/>
</dbReference>
<dbReference type="EnsemblMetazoa" id="C07G2.1b.1">
    <molecule id="Q17802-2"/>
    <property type="protein sequence ID" value="C07G2.1b.1"/>
    <property type="gene ID" value="WBGene00000465"/>
</dbReference>
<dbReference type="GeneID" id="175586"/>
<dbReference type="KEGG" id="cel:CELE_C07G2.1"/>
<dbReference type="UCSC" id="C07G2.1a.1">
    <molecule id="Q17802-1"/>
    <property type="organism name" value="c. elegans"/>
</dbReference>
<dbReference type="AGR" id="WB:WBGene00000465"/>
<dbReference type="CTD" id="175586"/>
<dbReference type="WormBase" id="C07G2.1a">
    <molecule id="Q17802-1"/>
    <property type="protein sequence ID" value="CE00665"/>
    <property type="gene ID" value="WBGene00000465"/>
    <property type="gene designation" value="cpg-1"/>
</dbReference>
<dbReference type="WormBase" id="C07G2.1b">
    <molecule id="Q17802-2"/>
    <property type="protein sequence ID" value="CE33971"/>
    <property type="gene ID" value="WBGene00000465"/>
    <property type="gene designation" value="cpg-1"/>
</dbReference>
<dbReference type="eggNOG" id="ENOG502RXTR">
    <property type="taxonomic scope" value="Eukaryota"/>
</dbReference>
<dbReference type="GeneTree" id="ENSGT00970000196129"/>
<dbReference type="HOGENOM" id="CLU_033369_0_0_1"/>
<dbReference type="InParanoid" id="Q17802"/>
<dbReference type="OMA" id="LRHEDCN"/>
<dbReference type="OrthoDB" id="5877064at2759"/>
<dbReference type="PRO" id="PR:Q17802"/>
<dbReference type="Proteomes" id="UP000001940">
    <property type="component" value="Chromosome III"/>
</dbReference>
<dbReference type="Bgee" id="WBGene00000465">
    <property type="expression patterns" value="Expressed in germ line (C elegans) and 3 other cell types or tissues"/>
</dbReference>
<dbReference type="GO" id="GO:0030312">
    <property type="term" value="C:external encapsulating structure"/>
    <property type="evidence" value="ECO:0000314"/>
    <property type="project" value="WormBase"/>
</dbReference>
<dbReference type="GO" id="GO:0005576">
    <property type="term" value="C:extracellular region"/>
    <property type="evidence" value="ECO:0007669"/>
    <property type="project" value="InterPro"/>
</dbReference>
<dbReference type="GO" id="GO:0008061">
    <property type="term" value="F:chitin binding"/>
    <property type="evidence" value="ECO:0000314"/>
    <property type="project" value="UniProtKB"/>
</dbReference>
<dbReference type="GO" id="GO:0030703">
    <property type="term" value="P:eggshell formation"/>
    <property type="evidence" value="ECO:0000316"/>
    <property type="project" value="WormBase"/>
</dbReference>
<dbReference type="GO" id="GO:0009792">
    <property type="term" value="P:embryo development ending in birth or egg hatching"/>
    <property type="evidence" value="ECO:0000315"/>
    <property type="project" value="UniProtKB"/>
</dbReference>
<dbReference type="GO" id="GO:0000281">
    <property type="term" value="P:mitotic cytokinesis"/>
    <property type="evidence" value="ECO:0000315"/>
    <property type="project" value="UniProtKB"/>
</dbReference>
<dbReference type="GO" id="GO:0032465">
    <property type="term" value="P:regulation of cytokinesis"/>
    <property type="evidence" value="ECO:0000316"/>
    <property type="project" value="WormBase"/>
</dbReference>
<dbReference type="FunFam" id="2.170.140.10:FF:000009">
    <property type="entry name" value="Chondroitin proteoglycan 1"/>
    <property type="match status" value="2"/>
</dbReference>
<dbReference type="Gene3D" id="2.170.140.10">
    <property type="entry name" value="Chitin binding domain"/>
    <property type="match status" value="2"/>
</dbReference>
<dbReference type="Gene3D" id="3.20.20.80">
    <property type="entry name" value="Glycosidases"/>
    <property type="match status" value="1"/>
</dbReference>
<dbReference type="InterPro" id="IPR002557">
    <property type="entry name" value="Chitin-bd_dom"/>
</dbReference>
<dbReference type="InterPro" id="IPR036508">
    <property type="entry name" value="Chitin-bd_dom_sf"/>
</dbReference>
<dbReference type="InterPro" id="IPR051940">
    <property type="entry name" value="Chitin_bind-dev_reg"/>
</dbReference>
<dbReference type="PANTHER" id="PTHR23301">
    <property type="entry name" value="CHITIN BINDING PERITROPHIN-A"/>
    <property type="match status" value="1"/>
</dbReference>
<dbReference type="PANTHER" id="PTHR23301:SF0">
    <property type="entry name" value="CHITIN-BINDING TYPE-2 DOMAIN-CONTAINING PROTEIN-RELATED"/>
    <property type="match status" value="1"/>
</dbReference>
<dbReference type="Pfam" id="PF01607">
    <property type="entry name" value="CBM_14"/>
    <property type="match status" value="3"/>
</dbReference>
<dbReference type="SMART" id="SM00494">
    <property type="entry name" value="ChtBD2"/>
    <property type="match status" value="3"/>
</dbReference>
<dbReference type="SUPFAM" id="SSF57625">
    <property type="entry name" value="Invertebrate chitin-binding proteins"/>
    <property type="match status" value="3"/>
</dbReference>
<dbReference type="PROSITE" id="PS50940">
    <property type="entry name" value="CHIT_BIND_II"/>
    <property type="match status" value="3"/>
</dbReference>
<accession>Q17802</accession>
<accession>Q1A3T6</accession>
<feature type="signal peptide" evidence="1">
    <location>
        <begin position="1"/>
        <end position="17"/>
    </location>
</feature>
<feature type="chain" id="PRO_0000023616" description="Chondroitin proteoglycan 1">
    <location>
        <begin position="18"/>
        <end position="584"/>
    </location>
</feature>
<feature type="domain" description="Chitin-binding type-2 1" evidence="2">
    <location>
        <begin position="58"/>
        <end position="115"/>
    </location>
</feature>
<feature type="domain" description="Chitin-binding type-2 2" evidence="2">
    <location>
        <begin position="211"/>
        <end position="268"/>
    </location>
</feature>
<feature type="domain" description="Chitin-binding type-2 3" evidence="2">
    <location>
        <begin position="524"/>
        <end position="578"/>
    </location>
</feature>
<feature type="region of interest" description="Disordered" evidence="3">
    <location>
        <begin position="267"/>
        <end position="295"/>
    </location>
</feature>
<feature type="glycosylation site" description="O-linked (Xyl...) (chondroitin sulfate) serine" evidence="6">
    <location>
        <position position="50"/>
    </location>
</feature>
<feature type="glycosylation site" description="N-linked (GlcNAc...) asparagine" evidence="1">
    <location>
        <position position="268"/>
    </location>
</feature>
<feature type="disulfide bond" evidence="2">
    <location>
        <begin position="91"/>
        <end position="104"/>
    </location>
</feature>
<feature type="disulfide bond" evidence="2">
    <location>
        <begin position="244"/>
        <end position="257"/>
    </location>
</feature>
<feature type="disulfide bond" evidence="2">
    <location>
        <begin position="554"/>
        <end position="567"/>
    </location>
</feature>
<feature type="splice variant" id="VSP_050569" description="In isoform b." evidence="9">
    <location>
        <begin position="124"/>
        <end position="547"/>
    </location>
</feature>
<gene>
    <name type="primary">cpg-1</name>
    <name type="synonym">cej-1</name>
    <name type="ORF">C07G2.1</name>
</gene>
<name>CPG1_CAEEL</name>
<organism evidence="10">
    <name type="scientific">Caenorhabditis elegans</name>
    <dbReference type="NCBI Taxonomy" id="6239"/>
    <lineage>
        <taxon>Eukaryota</taxon>
        <taxon>Metazoa</taxon>
        <taxon>Ecdysozoa</taxon>
        <taxon>Nematoda</taxon>
        <taxon>Chromadorea</taxon>
        <taxon>Rhabditida</taxon>
        <taxon>Rhabditina</taxon>
        <taxon>Rhabditomorpha</taxon>
        <taxon>Rhabditoidea</taxon>
        <taxon>Rhabditidae</taxon>
        <taxon>Peloderinae</taxon>
        <taxon>Caenorhabditis</taxon>
    </lineage>
</organism>
<evidence type="ECO:0000255" key="1"/>
<evidence type="ECO:0000255" key="2">
    <source>
        <dbReference type="PROSITE-ProRule" id="PRU00144"/>
    </source>
</evidence>
<evidence type="ECO:0000256" key="3">
    <source>
        <dbReference type="SAM" id="MobiDB-lite"/>
    </source>
</evidence>
<evidence type="ECO:0000269" key="4">
    <source>
    </source>
</evidence>
<evidence type="ECO:0000269" key="5">
    <source>
    </source>
</evidence>
<evidence type="ECO:0000269" key="6">
    <source>
    </source>
</evidence>
<evidence type="ECO:0000269" key="7">
    <source>
    </source>
</evidence>
<evidence type="ECO:0000269" key="8">
    <source>
    </source>
</evidence>
<evidence type="ECO:0000305" key="9"/>
<evidence type="ECO:0000312" key="10">
    <source>
        <dbReference type="EMBL" id="CAA83679.1"/>
    </source>
</evidence>
<sequence>MTLKPVLLAFLVASAYAQYGVAGMYENLPLETTTLDGSGDGSGADNGFVSGADAVAIDTDCSTKEDGLYAIGGCSPQFLTCSGGISRIMDCPADLIYDPRIVACEYSYNVPQCGGVPQDVTSTQEAYPSEETTVNPYAPVEEATTTPAEDVTVPEETTTEAYAPVDDYSTTTPAEDVPVPVETTASPYAPIVPYTTGAPAADEPVTRSAVTKSCVGKADGFYSFGECSDHYTACSNGYLIPMQCPARLAFDEARVICDYVMNVPECTNGSGNDEGSADETTPESSGEMPYSNGYGYEETTTVAEDVPSTKDYAEPIAAAYVARYPSEKTTAENVPTTTIGYEPEVVETTAPYVEETTTTVGYKPEVEETTTEAEVPTTTVGYEPEIVETTAPYVEETTTAADVPSTTAVYEPEVVETTTEAEVPTTTTVGYEPEVVETTVPYVEETTTAADVPTTTVGYEPEVEETTTEAEVPTTTVGYESEVVETTAADIPTTTIGYAPIVVESTTAADVPTTTVPAETTTEVPACVEGATAIEPCSQHYKNCVNGQEAIFICENGLFFSPEQARCAPADQIAECHQTTVQYY</sequence>
<proteinExistence type="evidence at protein level"/>
<protein>
    <recommendedName>
        <fullName>Chondroitin proteoglycan 1</fullName>
    </recommendedName>
    <alternativeName>
        <fullName>Cell junction protein 1</fullName>
    </alternativeName>
    <alternativeName>
        <fullName>Cytokinesis protein cej-1</fullName>
    </alternativeName>
</protein>
<keyword id="KW-0025">Alternative splicing</keyword>
<keyword id="KW-0131">Cell cycle</keyword>
<keyword id="KW-0132">Cell division</keyword>
<keyword id="KW-0147">Chitin-binding</keyword>
<keyword id="KW-0217">Developmental protein</keyword>
<keyword id="KW-1015">Disulfide bond</keyword>
<keyword id="KW-0325">Glycoprotein</keyword>
<keyword id="KW-0654">Proteoglycan</keyword>
<keyword id="KW-1185">Reference proteome</keyword>
<keyword id="KW-0677">Repeat</keyword>
<keyword id="KW-0732">Signal</keyword>
<reference key="1">
    <citation type="journal article" date="2006" name="J. Cell Biol.">
        <title>Identification of novel chondroitin proteoglycans in Caenorhabditis elegans: embryonic cell division depends on CPG-1 and CPG-2.</title>
        <authorList>
            <person name="Olson S.K."/>
            <person name="Bishop J.R."/>
            <person name="Yates J.R."/>
            <person name="Oegema K."/>
            <person name="Esko J.D."/>
        </authorList>
    </citation>
    <scope>NUCLEOTIDE SEQUENCE [MRNA] (ISOFORM A)</scope>
    <scope>IDENTIFICATION BY MASS SPECTROMETRY</scope>
    <scope>GLYCOSYLATION AT SER-50</scope>
    <scope>FUNCTION</scope>
    <scope>DISRUPTION PHENOTYPE</scope>
</reference>
<reference key="2">
    <citation type="journal article" date="1998" name="Science">
        <title>Genome sequence of the nematode C. elegans: a platform for investigating biology.</title>
        <authorList>
            <consortium name="The C. elegans sequencing consortium"/>
        </authorList>
    </citation>
    <scope>NUCLEOTIDE SEQUENCE [LARGE SCALE GENOMIC DNA]</scope>
    <scope>ALTERNATIVE SPLICING</scope>
    <source>
        <strain>Bristol N2</strain>
    </source>
</reference>
<reference key="3">
    <citation type="journal article" date="2000" name="Mol. Cell">
        <title>A global profile of germline gene expression in C. elegans.</title>
        <authorList>
            <person name="Reinke V."/>
            <person name="Smith H.E."/>
            <person name="Nance J."/>
            <person name="Wang J."/>
            <person name="Van Doren C."/>
            <person name="Begley R."/>
            <person name="Jones S.J.M."/>
            <person name="Davis E.B."/>
            <person name="Scherer S."/>
            <person name="Ward S."/>
            <person name="Kim S.K."/>
        </authorList>
    </citation>
    <scope>TISSUE SPECIFICITY</scope>
    <scope>DEVELOPMENTAL STAGE</scope>
</reference>
<reference evidence="9" key="4">
    <citation type="journal article" date="2001" name="Genes Dev.">
        <title>Identification of in vivo mRNA targets of GLD-1, a maxi-KH motif containing protein required for C. elegans germ cell development.</title>
        <authorList>
            <person name="Lee M.-H."/>
            <person name="Schedl T."/>
        </authorList>
    </citation>
    <scope>FUNCTION</scope>
</reference>
<reference key="5">
    <citation type="journal article" date="2006" name="BMC Biol.">
        <title>The eggshell is required for meiotic fidelity, polar-body extrusion and polarization of the C. elegans embryo.</title>
        <authorList>
            <person name="Johnston W.L."/>
            <person name="Krizus A."/>
            <person name="Dennis J.W."/>
        </authorList>
    </citation>
    <scope>FUNCTION</scope>
</reference>
<reference key="6">
    <citation type="journal article" date="2007" name="Development">
        <title>Cortical granule exocytosis in C. elegans is regulated by cell cycle components including separase.</title>
        <authorList>
            <person name="Bembenek J.N."/>
            <person name="Richie C.T."/>
            <person name="Squirrell J.M."/>
            <person name="Campbell J.M."/>
            <person name="Eliceiri K.W."/>
            <person name="Poteryaev D."/>
            <person name="Spang A."/>
            <person name="Golden A."/>
            <person name="White J.G."/>
        </authorList>
    </citation>
    <scope>FUNCTION</scope>
</reference>